<sequence length="218" mass="24477">MELTLHEARVIGCLLEKEVTTPEQYPLSLNALTLACNQKTSRDPVLDLSEAQVQDALDSLNKKRLISEQSGFGSRVVKYKHRFCNTEFSELQLSSAAVAIVCLLLLRGPQTPGELRTRSNRLHDFKDVLEVEACIKQLMERDKPVLAQLPREPGKRECRYTELFSQGAEQISAASFTSADAHPLNEQDRQQLEARVTQLEEQVAELKDKLDSLIASLS</sequence>
<evidence type="ECO:0000255" key="1">
    <source>
        <dbReference type="HAMAP-Rule" id="MF_01584"/>
    </source>
</evidence>
<protein>
    <recommendedName>
        <fullName evidence="1">UPF0502 protein Shewana3_1622</fullName>
    </recommendedName>
</protein>
<name>Y1622_SHESA</name>
<feature type="chain" id="PRO_0000309428" description="UPF0502 protein Shewana3_1622">
    <location>
        <begin position="1"/>
        <end position="218"/>
    </location>
</feature>
<reference key="1">
    <citation type="submission" date="2006-09" db="EMBL/GenBank/DDBJ databases">
        <title>Complete sequence of chromosome 1 of Shewanella sp. ANA-3.</title>
        <authorList>
            <person name="Copeland A."/>
            <person name="Lucas S."/>
            <person name="Lapidus A."/>
            <person name="Barry K."/>
            <person name="Detter J.C."/>
            <person name="Glavina del Rio T."/>
            <person name="Hammon N."/>
            <person name="Israni S."/>
            <person name="Dalin E."/>
            <person name="Tice H."/>
            <person name="Pitluck S."/>
            <person name="Chertkov O."/>
            <person name="Brettin T."/>
            <person name="Bruce D."/>
            <person name="Han C."/>
            <person name="Tapia R."/>
            <person name="Gilna P."/>
            <person name="Schmutz J."/>
            <person name="Larimer F."/>
            <person name="Land M."/>
            <person name="Hauser L."/>
            <person name="Kyrpides N."/>
            <person name="Kim E."/>
            <person name="Newman D."/>
            <person name="Salticov C."/>
            <person name="Konstantinidis K."/>
            <person name="Klappenback J."/>
            <person name="Tiedje J."/>
            <person name="Richardson P."/>
        </authorList>
    </citation>
    <scope>NUCLEOTIDE SEQUENCE [LARGE SCALE GENOMIC DNA]</scope>
    <source>
        <strain>ANA-3</strain>
    </source>
</reference>
<comment type="similarity">
    <text evidence="1">Belongs to the UPF0502 family.</text>
</comment>
<accession>A0KVN6</accession>
<dbReference type="EMBL" id="CP000469">
    <property type="protein sequence ID" value="ABK47855.1"/>
    <property type="molecule type" value="Genomic_DNA"/>
</dbReference>
<dbReference type="RefSeq" id="WP_011716658.1">
    <property type="nucleotide sequence ID" value="NC_008577.1"/>
</dbReference>
<dbReference type="SMR" id="A0KVN6"/>
<dbReference type="STRING" id="94122.Shewana3_1622"/>
<dbReference type="KEGG" id="shn:Shewana3_1622"/>
<dbReference type="eggNOG" id="COG3132">
    <property type="taxonomic scope" value="Bacteria"/>
</dbReference>
<dbReference type="HOGENOM" id="CLU_057831_2_0_6"/>
<dbReference type="OrthoDB" id="9784785at2"/>
<dbReference type="Proteomes" id="UP000002589">
    <property type="component" value="Chromosome"/>
</dbReference>
<dbReference type="Gene3D" id="1.10.10.10">
    <property type="entry name" value="Winged helix-like DNA-binding domain superfamily/Winged helix DNA-binding domain"/>
    <property type="match status" value="2"/>
</dbReference>
<dbReference type="HAMAP" id="MF_01584">
    <property type="entry name" value="UPF0502"/>
    <property type="match status" value="1"/>
</dbReference>
<dbReference type="InterPro" id="IPR007432">
    <property type="entry name" value="DUF480"/>
</dbReference>
<dbReference type="InterPro" id="IPR036388">
    <property type="entry name" value="WH-like_DNA-bd_sf"/>
</dbReference>
<dbReference type="InterPro" id="IPR036390">
    <property type="entry name" value="WH_DNA-bd_sf"/>
</dbReference>
<dbReference type="PANTHER" id="PTHR38768">
    <property type="entry name" value="UPF0502 PROTEIN YCEH"/>
    <property type="match status" value="1"/>
</dbReference>
<dbReference type="PANTHER" id="PTHR38768:SF1">
    <property type="entry name" value="UPF0502 PROTEIN YCEH"/>
    <property type="match status" value="1"/>
</dbReference>
<dbReference type="Pfam" id="PF04337">
    <property type="entry name" value="DUF480"/>
    <property type="match status" value="1"/>
</dbReference>
<dbReference type="SUPFAM" id="SSF46785">
    <property type="entry name" value="Winged helix' DNA-binding domain"/>
    <property type="match status" value="2"/>
</dbReference>
<organism>
    <name type="scientific">Shewanella sp. (strain ANA-3)</name>
    <dbReference type="NCBI Taxonomy" id="94122"/>
    <lineage>
        <taxon>Bacteria</taxon>
        <taxon>Pseudomonadati</taxon>
        <taxon>Pseudomonadota</taxon>
        <taxon>Gammaproteobacteria</taxon>
        <taxon>Alteromonadales</taxon>
        <taxon>Shewanellaceae</taxon>
        <taxon>Shewanella</taxon>
    </lineage>
</organism>
<proteinExistence type="inferred from homology"/>
<gene>
    <name type="ordered locus">Shewana3_1622</name>
</gene>